<accession>Q9FWW9</accession>
<accession>Q0WS53</accession>
<gene>
    <name type="ordered locus">At1g12200</name>
    <name type="ORF">T28K15.7</name>
</gene>
<dbReference type="EC" id="1.8.-.-"/>
<dbReference type="EMBL" id="AC022522">
    <property type="protein sequence ID" value="AAG12574.1"/>
    <property type="molecule type" value="Genomic_DNA"/>
</dbReference>
<dbReference type="EMBL" id="CP002684">
    <property type="protein sequence ID" value="AEE28848.1"/>
    <property type="molecule type" value="Genomic_DNA"/>
</dbReference>
<dbReference type="EMBL" id="AY091080">
    <property type="protein sequence ID" value="AAM13900.1"/>
    <property type="molecule type" value="mRNA"/>
</dbReference>
<dbReference type="EMBL" id="AY133791">
    <property type="protein sequence ID" value="AAM91725.1"/>
    <property type="molecule type" value="mRNA"/>
</dbReference>
<dbReference type="EMBL" id="AK228087">
    <property type="protein sequence ID" value="BAF00046.1"/>
    <property type="molecule type" value="mRNA"/>
</dbReference>
<dbReference type="PIR" id="A86257">
    <property type="entry name" value="A86257"/>
</dbReference>
<dbReference type="RefSeq" id="NP_172684.1">
    <property type="nucleotide sequence ID" value="NM_101092.4"/>
</dbReference>
<dbReference type="SMR" id="Q9FWW9"/>
<dbReference type="BioGRID" id="23013">
    <property type="interactions" value="4"/>
</dbReference>
<dbReference type="FunCoup" id="Q9FWW9">
    <property type="interactions" value="485"/>
</dbReference>
<dbReference type="STRING" id="3702.Q9FWW9"/>
<dbReference type="PaxDb" id="3702-AT1G12200.1"/>
<dbReference type="ProteomicsDB" id="247194"/>
<dbReference type="EnsemblPlants" id="AT1G12200.1">
    <property type="protein sequence ID" value="AT1G12200.1"/>
    <property type="gene ID" value="AT1G12200"/>
</dbReference>
<dbReference type="GeneID" id="837773"/>
<dbReference type="Gramene" id="AT1G12200.1">
    <property type="protein sequence ID" value="AT1G12200.1"/>
    <property type="gene ID" value="AT1G12200"/>
</dbReference>
<dbReference type="KEGG" id="ath:AT1G12200"/>
<dbReference type="Araport" id="AT1G12200"/>
<dbReference type="TAIR" id="AT1G12200">
    <property type="gene designation" value="FMO"/>
</dbReference>
<dbReference type="eggNOG" id="KOG1399">
    <property type="taxonomic scope" value="Eukaryota"/>
</dbReference>
<dbReference type="HOGENOM" id="CLU_006909_3_0_1"/>
<dbReference type="InParanoid" id="Q9FWW9"/>
<dbReference type="OMA" id="WFDLQYD"/>
<dbReference type="OrthoDB" id="66881at2759"/>
<dbReference type="PhylomeDB" id="Q9FWW9"/>
<dbReference type="BioCyc" id="ARA:AT1G12200-MONOMER"/>
<dbReference type="PRO" id="PR:Q9FWW9"/>
<dbReference type="Proteomes" id="UP000006548">
    <property type="component" value="Chromosome 1"/>
</dbReference>
<dbReference type="ExpressionAtlas" id="Q9FWW9">
    <property type="expression patterns" value="baseline and differential"/>
</dbReference>
<dbReference type="GO" id="GO:0050660">
    <property type="term" value="F:flavin adenine dinucleotide binding"/>
    <property type="evidence" value="ECO:0007669"/>
    <property type="project" value="InterPro"/>
</dbReference>
<dbReference type="GO" id="GO:0004499">
    <property type="term" value="F:N,N-dimethylaniline monooxygenase activity"/>
    <property type="evidence" value="ECO:0007669"/>
    <property type="project" value="InterPro"/>
</dbReference>
<dbReference type="GO" id="GO:0050661">
    <property type="term" value="F:NADP binding"/>
    <property type="evidence" value="ECO:0007669"/>
    <property type="project" value="InterPro"/>
</dbReference>
<dbReference type="GO" id="GO:0050832">
    <property type="term" value="P:defense response to fungus"/>
    <property type="evidence" value="ECO:0000270"/>
    <property type="project" value="TAIR"/>
</dbReference>
<dbReference type="FunFam" id="3.50.50.60:FF:000099">
    <property type="entry name" value="Flavin-containing monooxygenase"/>
    <property type="match status" value="1"/>
</dbReference>
<dbReference type="Gene3D" id="3.50.50.60">
    <property type="entry name" value="FAD/NAD(P)-binding domain"/>
    <property type="match status" value="2"/>
</dbReference>
<dbReference type="InterPro" id="IPR036188">
    <property type="entry name" value="FAD/NAD-bd_sf"/>
</dbReference>
<dbReference type="InterPro" id="IPR000960">
    <property type="entry name" value="Flavin_mOase"/>
</dbReference>
<dbReference type="InterPro" id="IPR020946">
    <property type="entry name" value="Flavin_mOase-like"/>
</dbReference>
<dbReference type="InterPro" id="IPR050346">
    <property type="entry name" value="FMO-like"/>
</dbReference>
<dbReference type="PANTHER" id="PTHR23023">
    <property type="entry name" value="DIMETHYLANILINE MONOOXYGENASE"/>
    <property type="match status" value="1"/>
</dbReference>
<dbReference type="Pfam" id="PF00743">
    <property type="entry name" value="FMO-like"/>
    <property type="match status" value="2"/>
</dbReference>
<dbReference type="PRINTS" id="PR00370">
    <property type="entry name" value="FMOXYGENASE"/>
</dbReference>
<dbReference type="SUPFAM" id="SSF51905">
    <property type="entry name" value="FAD/NAD(P)-binding domain"/>
    <property type="match status" value="2"/>
</dbReference>
<organism>
    <name type="scientific">Arabidopsis thaliana</name>
    <name type="common">Mouse-ear cress</name>
    <dbReference type="NCBI Taxonomy" id="3702"/>
    <lineage>
        <taxon>Eukaryota</taxon>
        <taxon>Viridiplantae</taxon>
        <taxon>Streptophyta</taxon>
        <taxon>Embryophyta</taxon>
        <taxon>Tracheophyta</taxon>
        <taxon>Spermatophyta</taxon>
        <taxon>Magnoliopsida</taxon>
        <taxon>eudicotyledons</taxon>
        <taxon>Gunneridae</taxon>
        <taxon>Pentapetalae</taxon>
        <taxon>rosids</taxon>
        <taxon>malvids</taxon>
        <taxon>Brassicales</taxon>
        <taxon>Brassicaceae</taxon>
        <taxon>Camelineae</taxon>
        <taxon>Arabidopsis</taxon>
    </lineage>
</organism>
<reference key="1">
    <citation type="journal article" date="2000" name="Nature">
        <title>Sequence and analysis of chromosome 1 of the plant Arabidopsis thaliana.</title>
        <authorList>
            <person name="Theologis A."/>
            <person name="Ecker J.R."/>
            <person name="Palm C.J."/>
            <person name="Federspiel N.A."/>
            <person name="Kaul S."/>
            <person name="White O."/>
            <person name="Alonso J."/>
            <person name="Altafi H."/>
            <person name="Araujo R."/>
            <person name="Bowman C.L."/>
            <person name="Brooks S.Y."/>
            <person name="Buehler E."/>
            <person name="Chan A."/>
            <person name="Chao Q."/>
            <person name="Chen H."/>
            <person name="Cheuk R.F."/>
            <person name="Chin C.W."/>
            <person name="Chung M.K."/>
            <person name="Conn L."/>
            <person name="Conway A.B."/>
            <person name="Conway A.R."/>
            <person name="Creasy T.H."/>
            <person name="Dewar K."/>
            <person name="Dunn P."/>
            <person name="Etgu P."/>
            <person name="Feldblyum T.V."/>
            <person name="Feng J.-D."/>
            <person name="Fong B."/>
            <person name="Fujii C.Y."/>
            <person name="Gill J.E."/>
            <person name="Goldsmith A.D."/>
            <person name="Haas B."/>
            <person name="Hansen N.F."/>
            <person name="Hughes B."/>
            <person name="Huizar L."/>
            <person name="Hunter J.L."/>
            <person name="Jenkins J."/>
            <person name="Johnson-Hopson C."/>
            <person name="Khan S."/>
            <person name="Khaykin E."/>
            <person name="Kim C.J."/>
            <person name="Koo H.L."/>
            <person name="Kremenetskaia I."/>
            <person name="Kurtz D.B."/>
            <person name="Kwan A."/>
            <person name="Lam B."/>
            <person name="Langin-Hooper S."/>
            <person name="Lee A."/>
            <person name="Lee J.M."/>
            <person name="Lenz C.A."/>
            <person name="Li J.H."/>
            <person name="Li Y.-P."/>
            <person name="Lin X."/>
            <person name="Liu S.X."/>
            <person name="Liu Z.A."/>
            <person name="Luros J.S."/>
            <person name="Maiti R."/>
            <person name="Marziali A."/>
            <person name="Militscher J."/>
            <person name="Miranda M."/>
            <person name="Nguyen M."/>
            <person name="Nierman W.C."/>
            <person name="Osborne B.I."/>
            <person name="Pai G."/>
            <person name="Peterson J."/>
            <person name="Pham P.K."/>
            <person name="Rizzo M."/>
            <person name="Rooney T."/>
            <person name="Rowley D."/>
            <person name="Sakano H."/>
            <person name="Salzberg S.L."/>
            <person name="Schwartz J.R."/>
            <person name="Shinn P."/>
            <person name="Southwick A.M."/>
            <person name="Sun H."/>
            <person name="Tallon L.J."/>
            <person name="Tambunga G."/>
            <person name="Toriumi M.J."/>
            <person name="Town C.D."/>
            <person name="Utterback T."/>
            <person name="Van Aken S."/>
            <person name="Vaysberg M."/>
            <person name="Vysotskaia V.S."/>
            <person name="Walker M."/>
            <person name="Wu D."/>
            <person name="Yu G."/>
            <person name="Fraser C.M."/>
            <person name="Venter J.C."/>
            <person name="Davis R.W."/>
        </authorList>
    </citation>
    <scope>NUCLEOTIDE SEQUENCE [LARGE SCALE GENOMIC DNA]</scope>
    <source>
        <strain>cv. Columbia</strain>
    </source>
</reference>
<reference key="2">
    <citation type="journal article" date="2017" name="Plant J.">
        <title>Araport11: a complete reannotation of the Arabidopsis thaliana reference genome.</title>
        <authorList>
            <person name="Cheng C.Y."/>
            <person name="Krishnakumar V."/>
            <person name="Chan A.P."/>
            <person name="Thibaud-Nissen F."/>
            <person name="Schobel S."/>
            <person name="Town C.D."/>
        </authorList>
    </citation>
    <scope>GENOME REANNOTATION</scope>
    <source>
        <strain>cv. Columbia</strain>
    </source>
</reference>
<reference key="3">
    <citation type="journal article" date="2003" name="Science">
        <title>Empirical analysis of transcriptional activity in the Arabidopsis genome.</title>
        <authorList>
            <person name="Yamada K."/>
            <person name="Lim J."/>
            <person name="Dale J.M."/>
            <person name="Chen H."/>
            <person name="Shinn P."/>
            <person name="Palm C.J."/>
            <person name="Southwick A.M."/>
            <person name="Wu H.C."/>
            <person name="Kim C.J."/>
            <person name="Nguyen M."/>
            <person name="Pham P.K."/>
            <person name="Cheuk R.F."/>
            <person name="Karlin-Newmann G."/>
            <person name="Liu S.X."/>
            <person name="Lam B."/>
            <person name="Sakano H."/>
            <person name="Wu T."/>
            <person name="Yu G."/>
            <person name="Miranda M."/>
            <person name="Quach H.L."/>
            <person name="Tripp M."/>
            <person name="Chang C.H."/>
            <person name="Lee J.M."/>
            <person name="Toriumi M.J."/>
            <person name="Chan M.M."/>
            <person name="Tang C.C."/>
            <person name="Onodera C.S."/>
            <person name="Deng J.M."/>
            <person name="Akiyama K."/>
            <person name="Ansari Y."/>
            <person name="Arakawa T."/>
            <person name="Banh J."/>
            <person name="Banno F."/>
            <person name="Bowser L."/>
            <person name="Brooks S.Y."/>
            <person name="Carninci P."/>
            <person name="Chao Q."/>
            <person name="Choy N."/>
            <person name="Enju A."/>
            <person name="Goldsmith A.D."/>
            <person name="Gurjal M."/>
            <person name="Hansen N.F."/>
            <person name="Hayashizaki Y."/>
            <person name="Johnson-Hopson C."/>
            <person name="Hsuan V.W."/>
            <person name="Iida K."/>
            <person name="Karnes M."/>
            <person name="Khan S."/>
            <person name="Koesema E."/>
            <person name="Ishida J."/>
            <person name="Jiang P.X."/>
            <person name="Jones T."/>
            <person name="Kawai J."/>
            <person name="Kamiya A."/>
            <person name="Meyers C."/>
            <person name="Nakajima M."/>
            <person name="Narusaka M."/>
            <person name="Seki M."/>
            <person name="Sakurai T."/>
            <person name="Satou M."/>
            <person name="Tamse R."/>
            <person name="Vaysberg M."/>
            <person name="Wallender E.K."/>
            <person name="Wong C."/>
            <person name="Yamamura Y."/>
            <person name="Yuan S."/>
            <person name="Shinozaki K."/>
            <person name="Davis R.W."/>
            <person name="Theologis A."/>
            <person name="Ecker J.R."/>
        </authorList>
    </citation>
    <scope>NUCLEOTIDE SEQUENCE [LARGE SCALE MRNA]</scope>
    <source>
        <strain>cv. Columbia</strain>
    </source>
</reference>
<reference key="4">
    <citation type="submission" date="2006-07" db="EMBL/GenBank/DDBJ databases">
        <title>Large-scale analysis of RIKEN Arabidopsis full-length (RAFL) cDNAs.</title>
        <authorList>
            <person name="Totoki Y."/>
            <person name="Seki M."/>
            <person name="Ishida J."/>
            <person name="Nakajima M."/>
            <person name="Enju A."/>
            <person name="Kamiya A."/>
            <person name="Narusaka M."/>
            <person name="Shin-i T."/>
            <person name="Nakagawa M."/>
            <person name="Sakamoto N."/>
            <person name="Oishi K."/>
            <person name="Kohara Y."/>
            <person name="Kobayashi M."/>
            <person name="Toyoda A."/>
            <person name="Sakaki Y."/>
            <person name="Sakurai T."/>
            <person name="Iida K."/>
            <person name="Akiyama K."/>
            <person name="Satou M."/>
            <person name="Toyoda T."/>
            <person name="Konagaya A."/>
            <person name="Carninci P."/>
            <person name="Kawai J."/>
            <person name="Hayashizaki Y."/>
            <person name="Shinozaki K."/>
        </authorList>
    </citation>
    <scope>NUCLEOTIDE SEQUENCE [LARGE SCALE MRNA] OF 86-465</scope>
    <source>
        <strain>cv. Columbia</strain>
    </source>
</reference>
<reference key="5">
    <citation type="journal article" date="2007" name="Plant J.">
        <title>Identification of a flavin-monooxygenase as the S-oxygenating enzyme in aliphatic glucosinolate biosynthesis in Arabidopsis.</title>
        <authorList>
            <person name="Hansen B.G."/>
            <person name="Kliebenstein D.J."/>
            <person name="Halkier B.A."/>
        </authorList>
    </citation>
    <scope>GENE FAMILY</scope>
    <source>
        <strain>cv. Columbia</strain>
    </source>
</reference>
<proteinExistence type="evidence at transcript level"/>
<sequence length="465" mass="52983">MATSHPDPTTSRHVAVIGAGAAGLVAARELRREGHSVVVLERGSQIGGVWAYTSQVEPDPLSLDPTRPVVHSSLYRSLRTNIPRECMGFTDFPFATRPHDGSRDPRRHPAHTEVLAYLRDFAKEFDIEEMVRFETEVVKAEQVAAEGEERGKWRVESRSSDGVVDEIYDAVVVCNGHYTEPRHALITGIDSWPGKQIHSHNYRVPDQFKDQVVIVIGSSASGVDICRDIAQVAKEVHVSSRSTSPDTYEKLTGYENLWLHSTIQIAREDGSVVFENGKTIYADTIMHCTGYKYYFPFLDTKGEVTVDDNRVGPLYKHVFPPALAPSLSFIGLPWQITPFPMFELQSKWVAAVLSGRVSLPSQDEMMEDTKAFYDKLEASGIPKRYTHLMPDDSQFEYDNWLADQCEYPRIEKWREQMFYIGFKRIYAQSSTYRDNWDDDHLIVEAYDDFVKFMSSYQELLPMLKT</sequence>
<evidence type="ECO:0000250" key="1"/>
<evidence type="ECO:0000255" key="2"/>
<evidence type="ECO:0000305" key="3"/>
<comment type="function">
    <text evidence="1">Catalyzes the conversion of methylthioalkyl glucosinolates of any chain length into methylsulfinylalkyl glucosinolates.</text>
</comment>
<comment type="cofactor">
    <cofactor evidence="1">
        <name>FAD</name>
        <dbReference type="ChEBI" id="CHEBI:57692"/>
    </cofactor>
</comment>
<comment type="similarity">
    <text evidence="3">Belongs to the FMO family.</text>
</comment>
<keyword id="KW-0274">FAD</keyword>
<keyword id="KW-0285">Flavoprotein</keyword>
<keyword id="KW-0503">Monooxygenase</keyword>
<keyword id="KW-0521">NADP</keyword>
<keyword id="KW-0560">Oxidoreductase</keyword>
<keyword id="KW-1185">Reference proteome</keyword>
<name>GSXL2_ARATH</name>
<feature type="chain" id="PRO_0000401957" description="Flavin-containing monooxygenase FMO GS-OX-like 2">
    <location>
        <begin position="1"/>
        <end position="465"/>
    </location>
</feature>
<feature type="binding site" evidence="2">
    <location>
        <begin position="18"/>
        <end position="23"/>
    </location>
    <ligand>
        <name>FAD</name>
        <dbReference type="ChEBI" id="CHEBI:57692"/>
    </ligand>
</feature>
<feature type="binding site" evidence="2">
    <location>
        <begin position="217"/>
        <end position="222"/>
    </location>
    <ligand>
        <name>NADP(+)</name>
        <dbReference type="ChEBI" id="CHEBI:58349"/>
    </ligand>
</feature>
<protein>
    <recommendedName>
        <fullName>Flavin-containing monooxygenase FMO GS-OX-like 2</fullName>
        <ecNumber>1.8.-.-</ecNumber>
    </recommendedName>
    <alternativeName>
        <fullName>Flavin-monooxygenase glucosinolate S-oxygenase-like 2</fullName>
    </alternativeName>
</protein>